<feature type="chain" id="PRO_0000069983" description="Nociceptin receptor">
    <location>
        <begin position="1"/>
        <end position="367"/>
    </location>
</feature>
<feature type="topological domain" description="Extracellular" evidence="1">
    <location>
        <begin position="1"/>
        <end position="45"/>
    </location>
</feature>
<feature type="transmembrane region" description="Helical; Name=1" evidence="1">
    <location>
        <begin position="46"/>
        <end position="71"/>
    </location>
</feature>
<feature type="topological domain" description="Cytoplasmic" evidence="1">
    <location>
        <begin position="72"/>
        <end position="84"/>
    </location>
</feature>
<feature type="transmembrane region" description="Helical; Name=2" evidence="1">
    <location>
        <begin position="85"/>
        <end position="106"/>
    </location>
</feature>
<feature type="topological domain" description="Extracellular" evidence="1">
    <location>
        <begin position="107"/>
        <end position="121"/>
    </location>
</feature>
<feature type="transmembrane region" description="Helical; Name=3" evidence="1">
    <location>
        <begin position="122"/>
        <end position="143"/>
    </location>
</feature>
<feature type="topological domain" description="Cytoplasmic" evidence="1">
    <location>
        <begin position="144"/>
        <end position="162"/>
    </location>
</feature>
<feature type="transmembrane region" description="Helical; Name=4" evidence="1">
    <location>
        <begin position="163"/>
        <end position="185"/>
    </location>
</feature>
<feature type="topological domain" description="Extracellular" evidence="1">
    <location>
        <begin position="186"/>
        <end position="208"/>
    </location>
</feature>
<feature type="transmembrane region" description="Helical; Name=5" evidence="1">
    <location>
        <begin position="209"/>
        <end position="233"/>
    </location>
</feature>
<feature type="topological domain" description="Cytoplasmic" evidence="1">
    <location>
        <begin position="234"/>
        <end position="261"/>
    </location>
</feature>
<feature type="transmembrane region" description="Helical; Name=6" evidence="1">
    <location>
        <begin position="262"/>
        <end position="282"/>
    </location>
</feature>
<feature type="topological domain" description="Extracellular" evidence="1">
    <location>
        <begin position="283"/>
        <end position="297"/>
    </location>
</feature>
<feature type="transmembrane region" description="Helical; Name=7" evidence="1">
    <location>
        <begin position="298"/>
        <end position="319"/>
    </location>
</feature>
<feature type="topological domain" description="Cytoplasmic" evidence="1">
    <location>
        <begin position="320"/>
        <end position="367"/>
    </location>
</feature>
<feature type="site" description="Important for G protein-mediated signaling" evidence="1">
    <location>
        <position position="107"/>
    </location>
</feature>
<feature type="site" description="Important for G protein-mediated signaling" evidence="1">
    <location>
        <position position="127"/>
    </location>
</feature>
<feature type="lipid moiety-binding region" description="S-palmitoyl cysteine" evidence="2">
    <location>
        <position position="331"/>
    </location>
</feature>
<feature type="glycosylation site" description="N-linked (GlcNAc...) asparagine" evidence="2">
    <location>
        <position position="21"/>
    </location>
</feature>
<feature type="glycosylation site" description="N-linked (GlcNAc...) asparagine" evidence="2">
    <location>
        <position position="26"/>
    </location>
</feature>
<feature type="glycosylation site" description="N-linked (GlcNAc...) asparagine" evidence="2">
    <location>
        <position position="36"/>
    </location>
</feature>
<feature type="disulfide bond" evidence="3">
    <location>
        <begin position="120"/>
        <end position="197"/>
    </location>
</feature>
<feature type="sequence conflict" description="In Ref. 2; AAA16201." evidence="12" ref="2">
    <original>G</original>
    <variation>R</variation>
    <location>
        <position position="105"/>
    </location>
</feature>
<feature type="sequence conflict" description="In Ref. 2; AAA16201." evidence="12" ref="2">
    <original>L</original>
    <variation>V</variation>
    <location>
        <position position="226"/>
    </location>
</feature>
<feature type="sequence conflict" description="In Ref. 2; AAA16201." evidence="12" ref="2">
    <original>S</original>
    <variation>P</variation>
    <location>
        <position position="246"/>
    </location>
</feature>
<feature type="sequence conflict" description="In Ref. 3." evidence="12" ref="3">
    <original>S</original>
    <variation>T</variation>
    <location>
        <position position="348"/>
    </location>
</feature>
<sequence>MESLFPAPYWEVLYGSHFQGNLSLLNETVPHHLLLNASHSAFLPLGLKVTIVGLYLAVCIGGLLGNCLVMYVILRHTKMKTATNIYIFNLALADTLVLLTLPFQGTDILLGFWPFGNALCKTVIAIDYYNMFTSTFTLTAMSVDRYVAICHPIRALDVRTSSKAQAVNVAIWALASVVGVPVAIMGSAQVEDEEIECLVEIPAPQDYWGPVFAICIFLFSFIIPVLIISVCYSLMIRRLRGVRLLSGSREKDRNLRRITRLVLVVVAVFVGCWTPVQVFVLVQGLGVQPGSETAVAILRFCTALGYVNSCLNPILYAFLDENFKACFRKFCCASSLHREMQVSDRVRSIAKDVGLGCKTSETVPRPA</sequence>
<organism>
    <name type="scientific">Rattus norvegicus</name>
    <name type="common">Rat</name>
    <dbReference type="NCBI Taxonomy" id="10116"/>
    <lineage>
        <taxon>Eukaryota</taxon>
        <taxon>Metazoa</taxon>
        <taxon>Chordata</taxon>
        <taxon>Craniata</taxon>
        <taxon>Vertebrata</taxon>
        <taxon>Euteleostomi</taxon>
        <taxon>Mammalia</taxon>
        <taxon>Eutheria</taxon>
        <taxon>Euarchontoglires</taxon>
        <taxon>Glires</taxon>
        <taxon>Rodentia</taxon>
        <taxon>Myomorpha</taxon>
        <taxon>Muroidea</taxon>
        <taxon>Muridae</taxon>
        <taxon>Murinae</taxon>
        <taxon>Rattus</taxon>
    </lineage>
</organism>
<keyword id="KW-0085">Behavior</keyword>
<keyword id="KW-1003">Cell membrane</keyword>
<keyword id="KW-0968">Cytoplasmic vesicle</keyword>
<keyword id="KW-1015">Disulfide bond</keyword>
<keyword id="KW-0297">G-protein coupled receptor</keyword>
<keyword id="KW-0325">Glycoprotein</keyword>
<keyword id="KW-0449">Lipoprotein</keyword>
<keyword id="KW-0472">Membrane</keyword>
<keyword id="KW-0564">Palmitate</keyword>
<keyword id="KW-0597">Phosphoprotein</keyword>
<keyword id="KW-0675">Receptor</keyword>
<keyword id="KW-1185">Reference proteome</keyword>
<keyword id="KW-0807">Transducer</keyword>
<keyword id="KW-0812">Transmembrane</keyword>
<keyword id="KW-1133">Transmembrane helix</keyword>
<dbReference type="EMBL" id="D16438">
    <property type="protein sequence ID" value="BAA03908.1"/>
    <property type="molecule type" value="mRNA"/>
</dbReference>
<dbReference type="EMBL" id="U05239">
    <property type="protein sequence ID" value="AAA16201.1"/>
    <property type="molecule type" value="mRNA"/>
</dbReference>
<dbReference type="EMBL" id="U01913">
    <property type="protein sequence ID" value="AAA21025.1"/>
    <property type="molecule type" value="mRNA"/>
</dbReference>
<dbReference type="EMBL" id="L28144">
    <property type="protein sequence ID" value="AAC37661.1"/>
    <property type="molecule type" value="mRNA"/>
</dbReference>
<dbReference type="EMBL" id="U07871">
    <property type="protein sequence ID" value="AAA69927.1"/>
    <property type="molecule type" value="mRNA"/>
</dbReference>
<dbReference type="EMBL" id="L33916">
    <property type="protein sequence ID" value="AAA50827.1"/>
    <property type="molecule type" value="mRNA"/>
</dbReference>
<dbReference type="EMBL" id="L29419">
    <property type="protein sequence ID" value="AAC42041.1"/>
    <property type="molecule type" value="mRNA"/>
</dbReference>
<dbReference type="EMBL" id="AF216218">
    <property type="protein sequence ID" value="AAF80990.1"/>
    <property type="molecule type" value="Genomic_DNA"/>
</dbReference>
<dbReference type="EMBL" id="AY152731">
    <property type="protein sequence ID" value="AAN77720.1"/>
    <property type="molecule type" value="mRNA"/>
</dbReference>
<dbReference type="PIR" id="I56520">
    <property type="entry name" value="I56520"/>
</dbReference>
<dbReference type="RefSeq" id="NP_113757.1">
    <property type="nucleotide sequence ID" value="NM_031569.4"/>
</dbReference>
<dbReference type="RefSeq" id="XP_006235798.1">
    <property type="nucleotide sequence ID" value="XM_006235736.3"/>
</dbReference>
<dbReference type="RefSeq" id="XP_006235800.1">
    <property type="nucleotide sequence ID" value="XM_006235738.5"/>
</dbReference>
<dbReference type="RefSeq" id="XP_017447001.1">
    <property type="nucleotide sequence ID" value="XM_017591512.1"/>
</dbReference>
<dbReference type="RefSeq" id="XP_017447002.1">
    <property type="nucleotide sequence ID" value="XM_017591513.1"/>
</dbReference>
<dbReference type="RefSeq" id="XP_017447003.1">
    <property type="nucleotide sequence ID" value="XM_017591514.1"/>
</dbReference>
<dbReference type="RefSeq" id="XP_038960359.1">
    <property type="nucleotide sequence ID" value="XM_039104431.2"/>
</dbReference>
<dbReference type="SMR" id="P35370"/>
<dbReference type="FunCoup" id="P35370">
    <property type="interactions" value="376"/>
</dbReference>
<dbReference type="STRING" id="10116.ENSRNOP00000047053"/>
<dbReference type="BindingDB" id="P35370"/>
<dbReference type="ChEMBL" id="CHEMBL4503"/>
<dbReference type="GuidetoPHARMACOLOGY" id="320"/>
<dbReference type="GlyCosmos" id="P35370">
    <property type="glycosylation" value="3 sites, No reported glycans"/>
</dbReference>
<dbReference type="GlyGen" id="P35370">
    <property type="glycosylation" value="3 sites"/>
</dbReference>
<dbReference type="iPTMnet" id="P35370"/>
<dbReference type="PhosphoSitePlus" id="P35370"/>
<dbReference type="PaxDb" id="10116-ENSRNOP00000047053"/>
<dbReference type="Ensembl" id="ENSRNOT00000045845.4">
    <property type="protein sequence ID" value="ENSRNOP00000047053.1"/>
    <property type="gene ID" value="ENSRNOG00000016768.8"/>
</dbReference>
<dbReference type="GeneID" id="29256"/>
<dbReference type="KEGG" id="rno:29256"/>
<dbReference type="UCSC" id="RGD:68438">
    <property type="organism name" value="rat"/>
</dbReference>
<dbReference type="AGR" id="RGD:68438"/>
<dbReference type="CTD" id="4987"/>
<dbReference type="RGD" id="68438">
    <property type="gene designation" value="Oprl1"/>
</dbReference>
<dbReference type="eggNOG" id="KOG3656">
    <property type="taxonomic scope" value="Eukaryota"/>
</dbReference>
<dbReference type="GeneTree" id="ENSGT00940000160661"/>
<dbReference type="HOGENOM" id="CLU_009579_8_1_1"/>
<dbReference type="InParanoid" id="P35370"/>
<dbReference type="OMA" id="VNICIWA"/>
<dbReference type="OrthoDB" id="6076970at2759"/>
<dbReference type="PhylomeDB" id="P35370"/>
<dbReference type="TreeFam" id="TF315737"/>
<dbReference type="Reactome" id="R-RNO-375276">
    <property type="pathway name" value="Peptide ligand-binding receptors"/>
</dbReference>
<dbReference type="Reactome" id="R-RNO-418594">
    <property type="pathway name" value="G alpha (i) signalling events"/>
</dbReference>
<dbReference type="PRO" id="PR:P35370"/>
<dbReference type="Proteomes" id="UP000002494">
    <property type="component" value="Chromosome 3"/>
</dbReference>
<dbReference type="Bgee" id="ENSRNOG00000016768">
    <property type="expression patterns" value="Expressed in frontal cortex and 4 other cell types or tissues"/>
</dbReference>
<dbReference type="ExpressionAtlas" id="P35370">
    <property type="expression patterns" value="baseline and differential"/>
</dbReference>
<dbReference type="GO" id="GO:0031410">
    <property type="term" value="C:cytoplasmic vesicle"/>
    <property type="evidence" value="ECO:0007669"/>
    <property type="project" value="UniProtKB-KW"/>
</dbReference>
<dbReference type="GO" id="GO:0043005">
    <property type="term" value="C:neuron projection"/>
    <property type="evidence" value="ECO:0000318"/>
    <property type="project" value="GO_Central"/>
</dbReference>
<dbReference type="GO" id="GO:0005886">
    <property type="term" value="C:plasma membrane"/>
    <property type="evidence" value="ECO:0000250"/>
    <property type="project" value="UniProtKB"/>
</dbReference>
<dbReference type="GO" id="GO:0097060">
    <property type="term" value="C:synaptic membrane"/>
    <property type="evidence" value="ECO:0000266"/>
    <property type="project" value="RGD"/>
</dbReference>
<dbReference type="GO" id="GO:0004930">
    <property type="term" value="F:G protein-coupled receptor activity"/>
    <property type="evidence" value="ECO:0000250"/>
    <property type="project" value="UniProtKB"/>
</dbReference>
<dbReference type="GO" id="GO:0042923">
    <property type="term" value="F:neuropeptide binding"/>
    <property type="evidence" value="ECO:0000318"/>
    <property type="project" value="GO_Central"/>
</dbReference>
<dbReference type="GO" id="GO:0001626">
    <property type="term" value="F:nociceptin receptor activity"/>
    <property type="evidence" value="ECO:0000250"/>
    <property type="project" value="UniProtKB"/>
</dbReference>
<dbReference type="GO" id="GO:0007193">
    <property type="term" value="P:adenylate cyclase-inhibiting G protein-coupled receptor signaling pathway"/>
    <property type="evidence" value="ECO:0000250"/>
    <property type="project" value="UniProtKB"/>
</dbReference>
<dbReference type="GO" id="GO:0019722">
    <property type="term" value="P:calcium-mediated signaling"/>
    <property type="evidence" value="ECO:0000266"/>
    <property type="project" value="RGD"/>
</dbReference>
<dbReference type="GO" id="GO:1990708">
    <property type="term" value="P:conditioned place preference"/>
    <property type="evidence" value="ECO:0000315"/>
    <property type="project" value="RGD"/>
</dbReference>
<dbReference type="GO" id="GO:0042755">
    <property type="term" value="P:eating behavior"/>
    <property type="evidence" value="ECO:0000315"/>
    <property type="project" value="RGD"/>
</dbReference>
<dbReference type="GO" id="GO:0044849">
    <property type="term" value="P:estrous cycle"/>
    <property type="evidence" value="ECO:0000270"/>
    <property type="project" value="RGD"/>
</dbReference>
<dbReference type="GO" id="GO:0106072">
    <property type="term" value="P:negative regulation of adenylate cyclase-activating G protein-coupled receptor signaling pathway"/>
    <property type="evidence" value="ECO:0000314"/>
    <property type="project" value="RGD"/>
</dbReference>
<dbReference type="GO" id="GO:0045776">
    <property type="term" value="P:negative regulation of blood pressure"/>
    <property type="evidence" value="ECO:0000315"/>
    <property type="project" value="RGD"/>
</dbReference>
<dbReference type="GO" id="GO:0141162">
    <property type="term" value="P:negative regulation of cAMP/PKA signal transduction"/>
    <property type="evidence" value="ECO:0000315"/>
    <property type="project" value="RGD"/>
</dbReference>
<dbReference type="GO" id="GO:0007270">
    <property type="term" value="P:neuron-neuron synaptic transmission"/>
    <property type="evidence" value="ECO:0000266"/>
    <property type="project" value="RGD"/>
</dbReference>
<dbReference type="GO" id="GO:0007218">
    <property type="term" value="P:neuropeptide signaling pathway"/>
    <property type="evidence" value="ECO:0000318"/>
    <property type="project" value="GO_Central"/>
</dbReference>
<dbReference type="GO" id="GO:0007200">
    <property type="term" value="P:phospholipase C-activating G protein-coupled receptor signaling pathway"/>
    <property type="evidence" value="ECO:0000266"/>
    <property type="project" value="RGD"/>
</dbReference>
<dbReference type="GO" id="GO:0035810">
    <property type="term" value="P:positive regulation of urine volume"/>
    <property type="evidence" value="ECO:0000314"/>
    <property type="project" value="RGD"/>
</dbReference>
<dbReference type="GO" id="GO:1904059">
    <property type="term" value="P:regulation of locomotor rhythm"/>
    <property type="evidence" value="ECO:0000315"/>
    <property type="project" value="RGD"/>
</dbReference>
<dbReference type="GO" id="GO:0032355">
    <property type="term" value="P:response to estradiol"/>
    <property type="evidence" value="ECO:0000270"/>
    <property type="project" value="RGD"/>
</dbReference>
<dbReference type="GO" id="GO:0019233">
    <property type="term" value="P:sensory perception of pain"/>
    <property type="evidence" value="ECO:0000250"/>
    <property type="project" value="UniProtKB"/>
</dbReference>
<dbReference type="CDD" id="cd15092">
    <property type="entry name" value="7tmA_NOFQ_opioid_R"/>
    <property type="match status" value="1"/>
</dbReference>
<dbReference type="FunFam" id="1.20.1070.10:FF:000014">
    <property type="entry name" value="Kappa-type opioid receptor 1"/>
    <property type="match status" value="1"/>
</dbReference>
<dbReference type="Gene3D" id="1.20.1070.10">
    <property type="entry name" value="Rhodopsin 7-helix transmembrane proteins"/>
    <property type="match status" value="1"/>
</dbReference>
<dbReference type="InterPro" id="IPR000276">
    <property type="entry name" value="GPCR_Rhodpsn"/>
</dbReference>
<dbReference type="InterPro" id="IPR017452">
    <property type="entry name" value="GPCR_Rhodpsn_7TM"/>
</dbReference>
<dbReference type="InterPro" id="IPR001418">
    <property type="entry name" value="Opioid_rcpt"/>
</dbReference>
<dbReference type="InterPro" id="IPR001420">
    <property type="entry name" value="X_opioid_rcpt"/>
</dbReference>
<dbReference type="PANTHER" id="PTHR24229">
    <property type="entry name" value="NEUROPEPTIDES RECEPTOR"/>
    <property type="match status" value="1"/>
</dbReference>
<dbReference type="PANTHER" id="PTHR24229:SF11">
    <property type="entry name" value="NOCICEPTIN RECEPTOR"/>
    <property type="match status" value="1"/>
</dbReference>
<dbReference type="Pfam" id="PF00001">
    <property type="entry name" value="7tm_1"/>
    <property type="match status" value="1"/>
</dbReference>
<dbReference type="PRINTS" id="PR00237">
    <property type="entry name" value="GPCRRHODOPSN"/>
</dbReference>
<dbReference type="PRINTS" id="PR00384">
    <property type="entry name" value="OPIOIDR"/>
</dbReference>
<dbReference type="PRINTS" id="PR00547">
    <property type="entry name" value="XOPIOIDR"/>
</dbReference>
<dbReference type="SMART" id="SM01381">
    <property type="entry name" value="7TM_GPCR_Srsx"/>
    <property type="match status" value="1"/>
</dbReference>
<dbReference type="SUPFAM" id="SSF81321">
    <property type="entry name" value="Family A G protein-coupled receptor-like"/>
    <property type="match status" value="1"/>
</dbReference>
<dbReference type="PROSITE" id="PS00237">
    <property type="entry name" value="G_PROTEIN_RECEP_F1_1"/>
    <property type="match status" value="1"/>
</dbReference>
<dbReference type="PROSITE" id="PS50262">
    <property type="entry name" value="G_PROTEIN_RECEP_F1_2"/>
    <property type="match status" value="1"/>
</dbReference>
<comment type="function">
    <text evidence="5 6">G-protein coupled opioid receptor that functions as a receptor for the endogenous neuropeptide nociceptin. Ligand binding causes a conformation change that triggers signaling via guanine nucleotide-binding proteins (G proteins) and modulates the activity of down-stream effectors. Signaling via G proteins mediates inhibition of adenylate cyclase activity and calcium channel activity. Arrestins modulate signaling via G proteins and mediate the activation of alternative signaling pathways that lead to the activation of MAP kinases. Plays a role in modulating nociception and the perception of pain. Plays a role in the regulation of locomotor activity by the neuropeptide nociceptin.</text>
</comment>
<comment type="subcellular location">
    <subcellularLocation>
        <location>Cell membrane</location>
        <topology>Multi-pass membrane protein</topology>
    </subcellularLocation>
    <subcellularLocation>
        <location evidence="1">Cytoplasmic vesicle</location>
    </subcellularLocation>
    <text evidence="1">Ligand binding leads to receptor internalization into cytoplasmic vesicles, decreasing the amount of available receptor at the cell surface (By similarity). Internalization requires phosphorylation at Ser-360. Can recycle to the cell membrane.</text>
</comment>
<comment type="tissue specificity">
    <text evidence="4 5 7 8 9 10 11">Highly expressed in several brain areas, the intestine, liver and spleen. Detected in sympathetic stellate ganglion neurons.</text>
</comment>
<comment type="PTM">
    <text evidence="1">Phosphorylation at Ser-360 requires GRK3.</text>
</comment>
<comment type="similarity">
    <text evidence="3">Belongs to the G-protein coupled receptor 1 family.</text>
</comment>
<accession>P35370</accession>
<accession>Q791R4</accession>
<protein>
    <recommendedName>
        <fullName>Nociceptin receptor</fullName>
    </recommendedName>
    <alternativeName>
        <fullName>Kappa-type 3 opioid receptor</fullName>
        <shortName>KOR-3</shortName>
    </alternativeName>
    <alternativeName>
        <fullName>Orphanin FQ receptor</fullName>
    </alternativeName>
    <alternativeName>
        <fullName>ROR-C</fullName>
    </alternativeName>
    <alternativeName>
        <fullName>XOR1</fullName>
    </alternativeName>
</protein>
<name>OPRX_RAT</name>
<reference key="1">
    <citation type="journal article" date="1994" name="FEBS Lett.">
        <title>cDNA cloning and regional distribution of a novel member of the opioid receptor family.</title>
        <authorList>
            <person name="Fukuda K."/>
            <person name="Kato S."/>
            <person name="Mori K."/>
            <person name="Nishi M."/>
            <person name="Takeshima H."/>
            <person name="Iwabe N."/>
            <person name="Miyata T."/>
            <person name="Houtani T."/>
            <person name="Sugimoto T."/>
        </authorList>
    </citation>
    <scope>NUCLEOTIDE SEQUENCE [MRNA]</scope>
    <scope>TISSUE SPECIFICITY</scope>
    <source>
        <strain>Wistar</strain>
        <tissue>Brain</tissue>
    </source>
</reference>
<reference key="2">
    <citation type="submission" date="1994-01" db="EMBL/GenBank/DDBJ databases">
        <authorList>
            <person name="Meng F."/>
            <person name="Xie G."/>
            <person name="Alfred M."/>
            <person name="Thompson R."/>
            <person name="Hoversten M."/>
            <person name="Watson S."/>
            <person name="Akil H."/>
        </authorList>
    </citation>
    <scope>NUCLEOTIDE SEQUENCE [MRNA]</scope>
    <source>
        <tissue>Hippocampus</tissue>
    </source>
</reference>
<reference key="3">
    <citation type="journal article" date="1994" name="FEBS Lett.">
        <title>Molecular cloning and tissue distribution of a putative member of the rat opioid receptor gene family that is not a mu, delta or kappa opioid receptor type.</title>
        <authorList>
            <person name="Bunzow J.R."/>
            <person name="Saez C."/>
            <person name="Mortrud M."/>
            <person name="Bouvier C."/>
            <person name="Williams J.T."/>
            <person name="Low M."/>
            <person name="Grandy D.K."/>
        </authorList>
    </citation>
    <scope>NUCLEOTIDE SEQUENCE [MRNA]</scope>
    <scope>TISSUE SPECIFICITY</scope>
    <source>
        <strain>Sprague-Dawley</strain>
        <tissue>Brain</tissue>
    </source>
</reference>
<reference key="4">
    <citation type="journal article" date="1994" name="FEBS Lett.">
        <title>Molecular cloning, tissue distribution and chromosomal localization of a novel member of the opioid receptor gene family.</title>
        <authorList>
            <person name="Chen Y."/>
            <person name="Fan Y."/>
            <person name="Liu J."/>
            <person name="Mestek A."/>
            <person name="Tian M."/>
            <person name="Kozak C.A."/>
            <person name="Yu L."/>
        </authorList>
    </citation>
    <scope>NUCLEOTIDE SEQUENCE [MRNA]</scope>
    <scope>TISSUE SPECIFICITY</scope>
</reference>
<reference key="5">
    <citation type="journal article" date="1995" name="J. Neurochem.">
        <title>Molecular cloning of a novel G protein-coupled receptor related to the opiate receptor family.</title>
        <authorList>
            <person name="Lachowicz J.E."/>
            <person name="Shen Y."/>
            <person name="Monsma F.J. Jr."/>
            <person name="Sibley D.R."/>
        </authorList>
    </citation>
    <scope>NUCLEOTIDE SEQUENCE [MRNA]</scope>
    <scope>TISSUE SPECIFICITY</scope>
    <source>
        <tissue>Brain</tissue>
    </source>
</reference>
<reference key="6">
    <citation type="journal article" date="1994" name="FEBS Lett.">
        <title>cDNA cloning of an orphan opiate receptor gene family member and its splice variant.</title>
        <authorList>
            <person name="Wang J.B."/>
            <person name="Johnson P.S."/>
            <person name="Imai Y."/>
            <person name="Persico A.M."/>
            <person name="Ozenberger B.A."/>
            <person name="Eppler C.M."/>
            <person name="Uhl G.R."/>
        </authorList>
    </citation>
    <scope>NUCLEOTIDE SEQUENCE [MRNA]</scope>
    <scope>TISSUE SPECIFICITY</scope>
    <source>
        <tissue>Brain</tissue>
    </source>
</reference>
<reference key="7">
    <citation type="journal article" date="1994" name="Brain Res. Mol. Brain Res.">
        <title>Isolation of a novel cDNA encoding a putative membrane receptor with high homology to the cloned mu, delta, and kappa opioid receptors.</title>
        <authorList>
            <person name="Wick M.J."/>
            <person name="Minnerath S.R."/>
            <person name="Lin X."/>
            <person name="Elde R.P."/>
            <person name="Law P.Y."/>
            <person name="Loh H.H."/>
        </authorList>
    </citation>
    <scope>NUCLEOTIDE SEQUENCE [MRNA]</scope>
    <source>
        <strain>Sprague-Dawley</strain>
        <tissue>Brain</tissue>
    </source>
</reference>
<reference key="8">
    <citation type="journal article" date="2001" name="Gene">
        <title>Molecular cloning of the orphanin FQ receptor gene and differential tissue expression of splice variants in rat.</title>
        <authorList>
            <person name="Curro D."/>
            <person name="Song I."/>
            <person name="Anderson M."/>
            <person name="Yoo J.H."/>
            <person name="Del Valle J."/>
            <person name="Owyang C."/>
        </authorList>
    </citation>
    <scope>NUCLEOTIDE SEQUENCE [GENOMIC DNA]</scope>
    <scope>TISSUE SPECIFICITY</scope>
</reference>
<reference key="9">
    <citation type="journal article" date="2005" name="J. Pharmacol. Exp. Ther.">
        <title>Modulation of Ca2+ channels by opioid receptor-like 1 receptors natively expressed in rat stellate ganglion neurons innervating cardiac muscle.</title>
        <authorList>
            <person name="Ruiz-Velasco V."/>
            <person name="Puhl H.L."/>
            <person name="Fuller B.C."/>
            <person name="Sumner A.D."/>
        </authorList>
    </citation>
    <scope>NUCLEOTIDE SEQUENCE [MRNA]</scope>
    <scope>FUNCTION</scope>
    <scope>TISSUE SPECIFICITY</scope>
    <source>
        <strain>Wistar</strain>
    </source>
</reference>
<reference key="10">
    <citation type="journal article" date="2008" name="Regul. Pept.">
        <title>Involvement of ORL1 receptor and ERK kinase in the orphanin FQ-induced nociception in the nucleus accumbens of rats.</title>
        <authorList>
            <person name="Chen L.Y."/>
            <person name="Huang J.X."/>
            <person name="Yu L.C."/>
        </authorList>
    </citation>
    <scope>FUNCTION</scope>
</reference>
<proteinExistence type="evidence at transcript level"/>
<gene>
    <name type="primary">Oprl1</name>
    <name type="synonym">Oor</name>
    <name type="synonym">Oprl</name>
</gene>
<evidence type="ECO:0000250" key="1"/>
<evidence type="ECO:0000255" key="2"/>
<evidence type="ECO:0000255" key="3">
    <source>
        <dbReference type="PROSITE-ProRule" id="PRU00521"/>
    </source>
</evidence>
<evidence type="ECO:0000269" key="4">
    <source>
    </source>
</evidence>
<evidence type="ECO:0000269" key="5">
    <source>
    </source>
</evidence>
<evidence type="ECO:0000269" key="6">
    <source>
    </source>
</evidence>
<evidence type="ECO:0000269" key="7">
    <source>
    </source>
</evidence>
<evidence type="ECO:0000269" key="8">
    <source>
    </source>
</evidence>
<evidence type="ECO:0000269" key="9">
    <source>
    </source>
</evidence>
<evidence type="ECO:0000269" key="10">
    <source>
    </source>
</evidence>
<evidence type="ECO:0000269" key="11">
    <source>
    </source>
</evidence>
<evidence type="ECO:0000305" key="12"/>